<organism>
    <name type="scientific">Salmonella typhimurium (strain LT2 / SGSC1412 / ATCC 700720)</name>
    <dbReference type="NCBI Taxonomy" id="99287"/>
    <lineage>
        <taxon>Bacteria</taxon>
        <taxon>Pseudomonadati</taxon>
        <taxon>Pseudomonadota</taxon>
        <taxon>Gammaproteobacteria</taxon>
        <taxon>Enterobacterales</taxon>
        <taxon>Enterobacteriaceae</taxon>
        <taxon>Salmonella</taxon>
    </lineage>
</organism>
<dbReference type="EMBL" id="AE006468">
    <property type="protein sequence ID" value="AAL20811.1"/>
    <property type="molecule type" value="Genomic_DNA"/>
</dbReference>
<dbReference type="RefSeq" id="NP_460852.1">
    <property type="nucleotide sequence ID" value="NC_003197.2"/>
</dbReference>
<dbReference type="RefSeq" id="WP_000580335.1">
    <property type="nucleotide sequence ID" value="NC_003197.2"/>
</dbReference>
<dbReference type="PDB" id="7PBL">
    <property type="method" value="EM"/>
    <property type="resolution" value="3.20 A"/>
    <property type="chains" value="G=156-203"/>
</dbReference>
<dbReference type="PDB" id="7PBM">
    <property type="method" value="EM"/>
    <property type="resolution" value="3.20 A"/>
    <property type="chains" value="G/H=156-203"/>
</dbReference>
<dbReference type="PDB" id="7PBN">
    <property type="method" value="EM"/>
    <property type="resolution" value="3.20 A"/>
    <property type="chains" value="G/H=156-203"/>
</dbReference>
<dbReference type="PDB" id="7PBO">
    <property type="method" value="EM"/>
    <property type="resolution" value="2.90 A"/>
    <property type="chains" value="G/H=156-203"/>
</dbReference>
<dbReference type="PDB" id="7PBP">
    <property type="method" value="EM"/>
    <property type="resolution" value="3.20 A"/>
    <property type="chains" value="G/H=156-203"/>
</dbReference>
<dbReference type="PDB" id="7PBQ">
    <property type="method" value="EM"/>
    <property type="resolution" value="3.10 A"/>
    <property type="chains" value="G=156-203"/>
</dbReference>
<dbReference type="PDB" id="7PBS">
    <property type="method" value="EM"/>
    <property type="resolution" value="3.30 A"/>
    <property type="chains" value="G=156-203"/>
</dbReference>
<dbReference type="PDB" id="7PBT">
    <property type="method" value="EM"/>
    <property type="resolution" value="3.30 A"/>
    <property type="chains" value="G=156-203"/>
</dbReference>
<dbReference type="PDB" id="7PBU">
    <property type="method" value="EM"/>
    <property type="resolution" value="3.30 A"/>
    <property type="chains" value="A/B/C/D/F/H/J/L=2-133"/>
</dbReference>
<dbReference type="PDBsum" id="7PBL"/>
<dbReference type="PDBsum" id="7PBM"/>
<dbReference type="PDBsum" id="7PBN"/>
<dbReference type="PDBsum" id="7PBO"/>
<dbReference type="PDBsum" id="7PBP"/>
<dbReference type="PDBsum" id="7PBQ"/>
<dbReference type="PDBsum" id="7PBS"/>
<dbReference type="PDBsum" id="7PBT"/>
<dbReference type="PDBsum" id="7PBU"/>
<dbReference type="SMR" id="P66746"/>
<dbReference type="STRING" id="99287.STM1895"/>
<dbReference type="PaxDb" id="99287-STM1895"/>
<dbReference type="GeneID" id="1253416"/>
<dbReference type="KEGG" id="stm:STM1895"/>
<dbReference type="PATRIC" id="fig|99287.12.peg.2009"/>
<dbReference type="HOGENOM" id="CLU_087936_0_0_6"/>
<dbReference type="OMA" id="ECAGVGY"/>
<dbReference type="PhylomeDB" id="P66746"/>
<dbReference type="BioCyc" id="SENT99287:STM1895-MONOMER"/>
<dbReference type="Proteomes" id="UP000001014">
    <property type="component" value="Chromosome"/>
</dbReference>
<dbReference type="GO" id="GO:0005737">
    <property type="term" value="C:cytoplasm"/>
    <property type="evidence" value="ECO:0007669"/>
    <property type="project" value="UniProtKB-SubCell"/>
</dbReference>
<dbReference type="GO" id="GO:0009379">
    <property type="term" value="C:Holliday junction helicase complex"/>
    <property type="evidence" value="ECO:0007669"/>
    <property type="project" value="InterPro"/>
</dbReference>
<dbReference type="GO" id="GO:0048476">
    <property type="term" value="C:Holliday junction resolvase complex"/>
    <property type="evidence" value="ECO:0007669"/>
    <property type="project" value="UniProtKB-UniRule"/>
</dbReference>
<dbReference type="GO" id="GO:0005524">
    <property type="term" value="F:ATP binding"/>
    <property type="evidence" value="ECO:0007669"/>
    <property type="project" value="InterPro"/>
</dbReference>
<dbReference type="GO" id="GO:0000400">
    <property type="term" value="F:four-way junction DNA binding"/>
    <property type="evidence" value="ECO:0007669"/>
    <property type="project" value="UniProtKB-UniRule"/>
</dbReference>
<dbReference type="GO" id="GO:0009378">
    <property type="term" value="F:four-way junction helicase activity"/>
    <property type="evidence" value="ECO:0000318"/>
    <property type="project" value="GO_Central"/>
</dbReference>
<dbReference type="GO" id="GO:0006310">
    <property type="term" value="P:DNA recombination"/>
    <property type="evidence" value="ECO:0007669"/>
    <property type="project" value="UniProtKB-UniRule"/>
</dbReference>
<dbReference type="GO" id="GO:0006281">
    <property type="term" value="P:DNA repair"/>
    <property type="evidence" value="ECO:0007669"/>
    <property type="project" value="UniProtKB-UniRule"/>
</dbReference>
<dbReference type="GO" id="GO:0009432">
    <property type="term" value="P:SOS response"/>
    <property type="evidence" value="ECO:0000318"/>
    <property type="project" value="GO_Central"/>
</dbReference>
<dbReference type="CDD" id="cd14332">
    <property type="entry name" value="UBA_RuvA_C"/>
    <property type="match status" value="1"/>
</dbReference>
<dbReference type="FunFam" id="1.10.150.20:FF:000012">
    <property type="entry name" value="Holliday junction ATP-dependent DNA helicase RuvA"/>
    <property type="match status" value="1"/>
</dbReference>
<dbReference type="FunFam" id="1.10.8.10:FF:000008">
    <property type="entry name" value="Holliday junction ATP-dependent DNA helicase RuvA"/>
    <property type="match status" value="1"/>
</dbReference>
<dbReference type="FunFam" id="2.40.50.140:FF:000083">
    <property type="entry name" value="Holliday junction ATP-dependent DNA helicase RuvA"/>
    <property type="match status" value="1"/>
</dbReference>
<dbReference type="Gene3D" id="1.10.150.20">
    <property type="entry name" value="5' to 3' exonuclease, C-terminal subdomain"/>
    <property type="match status" value="1"/>
</dbReference>
<dbReference type="Gene3D" id="1.10.8.10">
    <property type="entry name" value="DNA helicase RuvA subunit, C-terminal domain"/>
    <property type="match status" value="1"/>
</dbReference>
<dbReference type="Gene3D" id="2.40.50.140">
    <property type="entry name" value="Nucleic acid-binding proteins"/>
    <property type="match status" value="1"/>
</dbReference>
<dbReference type="HAMAP" id="MF_00031">
    <property type="entry name" value="DNA_HJ_migration_RuvA"/>
    <property type="match status" value="1"/>
</dbReference>
<dbReference type="InterPro" id="IPR013849">
    <property type="entry name" value="DNA_helicase_Holl-junc_RuvA_I"/>
</dbReference>
<dbReference type="InterPro" id="IPR003583">
    <property type="entry name" value="Hlx-hairpin-Hlx_DNA-bd_motif"/>
</dbReference>
<dbReference type="InterPro" id="IPR012340">
    <property type="entry name" value="NA-bd_OB-fold"/>
</dbReference>
<dbReference type="InterPro" id="IPR000085">
    <property type="entry name" value="RuvA"/>
</dbReference>
<dbReference type="InterPro" id="IPR010994">
    <property type="entry name" value="RuvA_2-like"/>
</dbReference>
<dbReference type="InterPro" id="IPR011114">
    <property type="entry name" value="RuvA_C"/>
</dbReference>
<dbReference type="InterPro" id="IPR036267">
    <property type="entry name" value="RuvA_C_sf"/>
</dbReference>
<dbReference type="NCBIfam" id="TIGR00084">
    <property type="entry name" value="ruvA"/>
    <property type="match status" value="1"/>
</dbReference>
<dbReference type="Pfam" id="PF14520">
    <property type="entry name" value="HHH_5"/>
    <property type="match status" value="1"/>
</dbReference>
<dbReference type="Pfam" id="PF07499">
    <property type="entry name" value="RuvA_C"/>
    <property type="match status" value="1"/>
</dbReference>
<dbReference type="Pfam" id="PF01330">
    <property type="entry name" value="RuvA_N"/>
    <property type="match status" value="1"/>
</dbReference>
<dbReference type="SMART" id="SM00278">
    <property type="entry name" value="HhH1"/>
    <property type="match status" value="2"/>
</dbReference>
<dbReference type="SUPFAM" id="SSF46929">
    <property type="entry name" value="DNA helicase RuvA subunit, C-terminal domain"/>
    <property type="match status" value="1"/>
</dbReference>
<dbReference type="SUPFAM" id="SSF50249">
    <property type="entry name" value="Nucleic acid-binding proteins"/>
    <property type="match status" value="1"/>
</dbReference>
<dbReference type="SUPFAM" id="SSF47781">
    <property type="entry name" value="RuvA domain 2-like"/>
    <property type="match status" value="1"/>
</dbReference>
<reference key="1">
    <citation type="journal article" date="2001" name="Nature">
        <title>Complete genome sequence of Salmonella enterica serovar Typhimurium LT2.</title>
        <authorList>
            <person name="McClelland M."/>
            <person name="Sanderson K.E."/>
            <person name="Spieth J."/>
            <person name="Clifton S.W."/>
            <person name="Latreille P."/>
            <person name="Courtney L."/>
            <person name="Porwollik S."/>
            <person name="Ali J."/>
            <person name="Dante M."/>
            <person name="Du F."/>
            <person name="Hou S."/>
            <person name="Layman D."/>
            <person name="Leonard S."/>
            <person name="Nguyen C."/>
            <person name="Scott K."/>
            <person name="Holmes A."/>
            <person name="Grewal N."/>
            <person name="Mulvaney E."/>
            <person name="Ryan E."/>
            <person name="Sun H."/>
            <person name="Florea L."/>
            <person name="Miller W."/>
            <person name="Stoneking T."/>
            <person name="Nhan M."/>
            <person name="Waterston R."/>
            <person name="Wilson R.K."/>
        </authorList>
    </citation>
    <scope>NUCLEOTIDE SEQUENCE [LARGE SCALE GENOMIC DNA]</scope>
    <source>
        <strain>LT2 / SGSC1412 / ATCC 700720</strain>
    </source>
</reference>
<reference evidence="5 6 7 8 9 10 11 12 13" key="2">
    <citation type="journal article" date="2022" name="Nature">
        <title>Mechanism of AAA+ ATPase-mediated RuvAB-Holliday junction branch migration.</title>
        <authorList>
            <person name="Wald J."/>
            <person name="Fahrenkamp D."/>
            <person name="Goessweiner-Mohr N."/>
            <person name="Lugmayr W."/>
            <person name="Ciccarelli L."/>
            <person name="Vesper O."/>
            <person name="Marlovits T.C."/>
        </authorList>
    </citation>
    <scope>STRUCTURE BY ELECTRON MICROSCOPY (2.90 ANGSTROMS) OF 156-203 IN COMPLEX WITH RUVB; NUCLEOTIDES; MG(2+) AND HOLLIDAY JUNCTION DNA</scope>
    <scope>STRUCTURE BY ELECTRON MICROSCOPY (3.30 ANGSTROMS) OF 2-133 IN COMPLEX WITH HOLLIDAY JUNCTION DNA</scope>
    <scope>FUNCTION</scope>
    <scope>REACTION MECHANISM</scope>
    <scope>SUBUNIT</scope>
    <scope>DOMAIN</scope>
    <scope>DNA-BINDING</scope>
</reference>
<accession>P66746</accession>
<accession>Q8XFH9</accession>
<keyword id="KW-0002">3D-structure</keyword>
<keyword id="KW-0963">Cytoplasm</keyword>
<keyword id="KW-0227">DNA damage</keyword>
<keyword id="KW-0233">DNA recombination</keyword>
<keyword id="KW-0234">DNA repair</keyword>
<keyword id="KW-0238">DNA-binding</keyword>
<keyword id="KW-1185">Reference proteome</keyword>
<name>RUVA_SALTY</name>
<protein>
    <recommendedName>
        <fullName evidence="1">Holliday junction branch migration complex subunit RuvA</fullName>
    </recommendedName>
</protein>
<comment type="function">
    <text evidence="1">The RuvA-RuvB-RuvC complex processes Holliday junction (HJ) DNA during genetic recombination and DNA repair, while the RuvA-RuvB complex plays an important role in the rescue of blocked DNA replication forks via replication fork reversal (RFR). RuvA specifically binds to HJ cruciform DNA, conferring on it an open structure. The RuvB hexamer acts as an ATP-dependent pump, pulling dsDNA into and through the RuvAB complex. HJ branch migration allows RuvC to scan DNA until it finds its consensus sequence, where it cleaves and resolves the cruciform DNA.</text>
</comment>
<comment type="function">
    <text evidence="2">In complex with Holliday junction (HJ) DNA, endogenous RuvB or RuvB from S.thermophilus and ATP catalyzes branch migration (PubMed:36002576). Binding of domain III of RuvA to a single subunit of the RuvB hexamer activates the RuvB ATPase 2 subunits away and nucleotide exchange in the adjacent RuvB subunit (PubMed:36002576).</text>
</comment>
<comment type="subunit">
    <text evidence="2 4">Forms a double-tetrameric structure around Holliday junction DNA (HJ); the DNA is nearly flattened between the 2 tetramers. Each domain III contacts a single RuvB subunit, 2 on each side of the HJ; forms an RuvA(8)-RuvB(12)-Holliday junction (HJ) complex which drives branch migration (PubMed:36002576). In the full resolvosome a probable DNA-RuvA(4)-RuvB(12)-RuvC(2) complex forms which resolves the HJ (Probable).</text>
</comment>
<comment type="subcellular location">
    <subcellularLocation>
        <location evidence="1">Cytoplasm</location>
    </subcellularLocation>
</comment>
<comment type="domain">
    <text evidence="2 4">Has three domains with a flexible linker between the domains II and III, and assumes an 'L' shape (Probable). In the assembled complex, domain III contacts 2 of the RuvB subunits (PubMed:36002576).</text>
</comment>
<comment type="similarity">
    <text evidence="1">Belongs to the RuvA family.</text>
</comment>
<sequence>MIGRLRGIILEKQPPIVLLETGGVGYEVHMPMTCFYELPEAGQEAIVFTHFVVREDAQLLYGFNNKQERTLFKELIKTNGVGPKLALAILSGMSAQQFVNAVEREELGALVKLPGIGKKTAERLIVEMKDRFKGLHGDLFTPAVDLVLTSPASPTSEDAEQEAVAALVALGYKPQEASRMVSKIARPDASSETLIRDALRAAL</sequence>
<feature type="chain" id="PRO_0000094674" description="Holliday junction branch migration complex subunit RuvA">
    <location>
        <begin position="1"/>
        <end position="203"/>
    </location>
</feature>
<feature type="region of interest" description="Domain I" evidence="1">
    <location>
        <begin position="1"/>
        <end position="64"/>
    </location>
</feature>
<feature type="region of interest" description="Domain II" evidence="1">
    <location>
        <begin position="65"/>
        <end position="142"/>
    </location>
</feature>
<feature type="region of interest" description="Flexible linker" evidence="1">
    <location>
        <begin position="143"/>
        <end position="154"/>
    </location>
</feature>
<feature type="region of interest" description="Domain III" evidence="1 2">
    <location>
        <begin position="156"/>
        <end position="203"/>
    </location>
</feature>
<feature type="helix" evidence="14">
    <location>
        <begin position="157"/>
        <end position="169"/>
    </location>
</feature>
<feature type="helix" evidence="14">
    <location>
        <begin position="174"/>
        <end position="182"/>
    </location>
</feature>
<feature type="strand" evidence="14">
    <location>
        <begin position="187"/>
        <end position="189"/>
    </location>
</feature>
<feature type="helix" evidence="14">
    <location>
        <begin position="191"/>
        <end position="201"/>
    </location>
</feature>
<proteinExistence type="evidence at protein level"/>
<gene>
    <name evidence="1 3" type="primary">ruvA</name>
    <name type="ordered locus">STM1895</name>
</gene>
<evidence type="ECO:0000255" key="1">
    <source>
        <dbReference type="HAMAP-Rule" id="MF_00031"/>
    </source>
</evidence>
<evidence type="ECO:0000269" key="2">
    <source>
    </source>
</evidence>
<evidence type="ECO:0000303" key="3">
    <source>
    </source>
</evidence>
<evidence type="ECO:0000305" key="4">
    <source>
    </source>
</evidence>
<evidence type="ECO:0000312" key="5">
    <source>
        <dbReference type="PDB" id="7PBL"/>
    </source>
</evidence>
<evidence type="ECO:0000312" key="6">
    <source>
        <dbReference type="PDB" id="7PBM"/>
    </source>
</evidence>
<evidence type="ECO:0000312" key="7">
    <source>
        <dbReference type="PDB" id="7PBN"/>
    </source>
</evidence>
<evidence type="ECO:0000312" key="8">
    <source>
        <dbReference type="PDB" id="7PBO"/>
    </source>
</evidence>
<evidence type="ECO:0000312" key="9">
    <source>
        <dbReference type="PDB" id="7PBP"/>
    </source>
</evidence>
<evidence type="ECO:0000312" key="10">
    <source>
        <dbReference type="PDB" id="7PBQ"/>
    </source>
</evidence>
<evidence type="ECO:0000312" key="11">
    <source>
        <dbReference type="PDB" id="7PBS"/>
    </source>
</evidence>
<evidence type="ECO:0000312" key="12">
    <source>
        <dbReference type="PDB" id="7PBT"/>
    </source>
</evidence>
<evidence type="ECO:0000312" key="13">
    <source>
        <dbReference type="PDB" id="7PBU"/>
    </source>
</evidence>
<evidence type="ECO:0007829" key="14">
    <source>
        <dbReference type="PDB" id="7PBO"/>
    </source>
</evidence>